<keyword id="KW-0002">3D-structure</keyword>
<keyword id="KW-0007">Acetylation</keyword>
<keyword id="KW-0025">Alternative splicing</keyword>
<keyword id="KW-0963">Cytoplasm</keyword>
<keyword id="KW-0251">Elongation factor</keyword>
<keyword id="KW-0342">GTP-binding</keyword>
<keyword id="KW-0378">Hydrolase</keyword>
<keyword id="KW-0547">Nucleotide-binding</keyword>
<keyword id="KW-0597">Phosphoprotein</keyword>
<keyword id="KW-0648">Protein biosynthesis</keyword>
<keyword id="KW-1185">Reference proteome</keyword>
<keyword id="KW-0810">Translation regulation</keyword>
<evidence type="ECO:0000250" key="1">
    <source>
        <dbReference type="UniProtKB" id="P32769"/>
    </source>
</evidence>
<evidence type="ECO:0000250" key="2">
    <source>
        <dbReference type="UniProtKB" id="Q9Y450"/>
    </source>
</evidence>
<evidence type="ECO:0000255" key="3">
    <source>
        <dbReference type="PROSITE-ProRule" id="PRU01059"/>
    </source>
</evidence>
<evidence type="ECO:0000256" key="4">
    <source>
        <dbReference type="SAM" id="MobiDB-lite"/>
    </source>
</evidence>
<evidence type="ECO:0000269" key="5">
    <source>
    </source>
</evidence>
<evidence type="ECO:0000269" key="6">
    <source>
    </source>
</evidence>
<evidence type="ECO:0000303" key="7">
    <source>
    </source>
</evidence>
<evidence type="ECO:0000303" key="8">
    <source>
    </source>
</evidence>
<evidence type="ECO:0000303" key="9">
    <source>
    </source>
</evidence>
<evidence type="ECO:0000303" key="10">
    <source>
    </source>
</evidence>
<evidence type="ECO:0000305" key="11"/>
<evidence type="ECO:0007744" key="12">
    <source>
    </source>
</evidence>
<evidence type="ECO:0007744" key="13">
    <source>
    </source>
</evidence>
<evidence type="ECO:0007829" key="14">
    <source>
        <dbReference type="PDB" id="1UFZ"/>
    </source>
</evidence>
<reference key="1">
    <citation type="journal article" date="1998" name="FEBS Lett.">
        <title>The product of the mammalian orthologue of the Saccharomyces cerevisiae HBS1 gene is phylogenetically related to eukaryotic release factor 3 (eRF3) but does not carry eRF3-like activity.</title>
        <authorList>
            <person name="Wallrapp C."/>
            <person name="Verrier S.-B."/>
            <person name="Zhouravleva G."/>
            <person name="Philippe H."/>
            <person name="Philippe M."/>
            <person name="Gress T.M."/>
            <person name="Jean-Jean O."/>
        </authorList>
    </citation>
    <scope>NUCLEOTIDE SEQUENCE [MRNA] (ISOFORM 2)</scope>
    <scope>TISSUE SPECIFICITY</scope>
    <source>
        <strain>NIH Swiss</strain>
        <tissue>Embryo</tissue>
    </source>
</reference>
<reference key="2">
    <citation type="journal article" date="2004" name="DNA Res.">
        <title>Prediction of the coding sequences of mouse homologues of KIAA gene: IV. The complete nucleotide sequences of 500 mouse KIAA-homologous cDNAs identified by screening of terminal sequences of cDNA clones randomly sampled from size-fractionated libraries.</title>
        <authorList>
            <person name="Okazaki N."/>
            <person name="Kikuno R."/>
            <person name="Ohara R."/>
            <person name="Inamoto S."/>
            <person name="Koseki H."/>
            <person name="Hiraoka S."/>
            <person name="Saga Y."/>
            <person name="Seino S."/>
            <person name="Nishimura M."/>
            <person name="Kaisho T."/>
            <person name="Hoshino K."/>
            <person name="Kitamura H."/>
            <person name="Nagase T."/>
            <person name="Ohara O."/>
            <person name="Koga H."/>
        </authorList>
    </citation>
    <scope>NUCLEOTIDE SEQUENCE [LARGE SCALE MRNA] (ISOFORM 1)</scope>
    <source>
        <tissue>Pancreatic islet</tissue>
    </source>
</reference>
<reference key="3">
    <citation type="journal article" date="2005" name="Science">
        <title>The transcriptional landscape of the mammalian genome.</title>
        <authorList>
            <person name="Carninci P."/>
            <person name="Kasukawa T."/>
            <person name="Katayama S."/>
            <person name="Gough J."/>
            <person name="Frith M.C."/>
            <person name="Maeda N."/>
            <person name="Oyama R."/>
            <person name="Ravasi T."/>
            <person name="Lenhard B."/>
            <person name="Wells C."/>
            <person name="Kodzius R."/>
            <person name="Shimokawa K."/>
            <person name="Bajic V.B."/>
            <person name="Brenner S.E."/>
            <person name="Batalov S."/>
            <person name="Forrest A.R."/>
            <person name="Zavolan M."/>
            <person name="Davis M.J."/>
            <person name="Wilming L.G."/>
            <person name="Aidinis V."/>
            <person name="Allen J.E."/>
            <person name="Ambesi-Impiombato A."/>
            <person name="Apweiler R."/>
            <person name="Aturaliya R.N."/>
            <person name="Bailey T.L."/>
            <person name="Bansal M."/>
            <person name="Baxter L."/>
            <person name="Beisel K.W."/>
            <person name="Bersano T."/>
            <person name="Bono H."/>
            <person name="Chalk A.M."/>
            <person name="Chiu K.P."/>
            <person name="Choudhary V."/>
            <person name="Christoffels A."/>
            <person name="Clutterbuck D.R."/>
            <person name="Crowe M.L."/>
            <person name="Dalla E."/>
            <person name="Dalrymple B.P."/>
            <person name="de Bono B."/>
            <person name="Della Gatta G."/>
            <person name="di Bernardo D."/>
            <person name="Down T."/>
            <person name="Engstrom P."/>
            <person name="Fagiolini M."/>
            <person name="Faulkner G."/>
            <person name="Fletcher C.F."/>
            <person name="Fukushima T."/>
            <person name="Furuno M."/>
            <person name="Futaki S."/>
            <person name="Gariboldi M."/>
            <person name="Georgii-Hemming P."/>
            <person name="Gingeras T.R."/>
            <person name="Gojobori T."/>
            <person name="Green R.E."/>
            <person name="Gustincich S."/>
            <person name="Harbers M."/>
            <person name="Hayashi Y."/>
            <person name="Hensch T.K."/>
            <person name="Hirokawa N."/>
            <person name="Hill D."/>
            <person name="Huminiecki L."/>
            <person name="Iacono M."/>
            <person name="Ikeo K."/>
            <person name="Iwama A."/>
            <person name="Ishikawa T."/>
            <person name="Jakt M."/>
            <person name="Kanapin A."/>
            <person name="Katoh M."/>
            <person name="Kawasawa Y."/>
            <person name="Kelso J."/>
            <person name="Kitamura H."/>
            <person name="Kitano H."/>
            <person name="Kollias G."/>
            <person name="Krishnan S.P."/>
            <person name="Kruger A."/>
            <person name="Kummerfeld S.K."/>
            <person name="Kurochkin I.V."/>
            <person name="Lareau L.F."/>
            <person name="Lazarevic D."/>
            <person name="Lipovich L."/>
            <person name="Liu J."/>
            <person name="Liuni S."/>
            <person name="McWilliam S."/>
            <person name="Madan Babu M."/>
            <person name="Madera M."/>
            <person name="Marchionni L."/>
            <person name="Matsuda H."/>
            <person name="Matsuzawa S."/>
            <person name="Miki H."/>
            <person name="Mignone F."/>
            <person name="Miyake S."/>
            <person name="Morris K."/>
            <person name="Mottagui-Tabar S."/>
            <person name="Mulder N."/>
            <person name="Nakano N."/>
            <person name="Nakauchi H."/>
            <person name="Ng P."/>
            <person name="Nilsson R."/>
            <person name="Nishiguchi S."/>
            <person name="Nishikawa S."/>
            <person name="Nori F."/>
            <person name="Ohara O."/>
            <person name="Okazaki Y."/>
            <person name="Orlando V."/>
            <person name="Pang K.C."/>
            <person name="Pavan W.J."/>
            <person name="Pavesi G."/>
            <person name="Pesole G."/>
            <person name="Petrovsky N."/>
            <person name="Piazza S."/>
            <person name="Reed J."/>
            <person name="Reid J.F."/>
            <person name="Ring B.Z."/>
            <person name="Ringwald M."/>
            <person name="Rost B."/>
            <person name="Ruan Y."/>
            <person name="Salzberg S.L."/>
            <person name="Sandelin A."/>
            <person name="Schneider C."/>
            <person name="Schoenbach C."/>
            <person name="Sekiguchi K."/>
            <person name="Semple C.A."/>
            <person name="Seno S."/>
            <person name="Sessa L."/>
            <person name="Sheng Y."/>
            <person name="Shibata Y."/>
            <person name="Shimada H."/>
            <person name="Shimada K."/>
            <person name="Silva D."/>
            <person name="Sinclair B."/>
            <person name="Sperling S."/>
            <person name="Stupka E."/>
            <person name="Sugiura K."/>
            <person name="Sultana R."/>
            <person name="Takenaka Y."/>
            <person name="Taki K."/>
            <person name="Tammoja K."/>
            <person name="Tan S.L."/>
            <person name="Tang S."/>
            <person name="Taylor M.S."/>
            <person name="Tegner J."/>
            <person name="Teichmann S.A."/>
            <person name="Ueda H.R."/>
            <person name="van Nimwegen E."/>
            <person name="Verardo R."/>
            <person name="Wei C.L."/>
            <person name="Yagi K."/>
            <person name="Yamanishi H."/>
            <person name="Zabarovsky E."/>
            <person name="Zhu S."/>
            <person name="Zimmer A."/>
            <person name="Hide W."/>
            <person name="Bult C."/>
            <person name="Grimmond S.M."/>
            <person name="Teasdale R.D."/>
            <person name="Liu E.T."/>
            <person name="Brusic V."/>
            <person name="Quackenbush J."/>
            <person name="Wahlestedt C."/>
            <person name="Mattick J.S."/>
            <person name="Hume D.A."/>
            <person name="Kai C."/>
            <person name="Sasaki D."/>
            <person name="Tomaru Y."/>
            <person name="Fukuda S."/>
            <person name="Kanamori-Katayama M."/>
            <person name="Suzuki M."/>
            <person name="Aoki J."/>
            <person name="Arakawa T."/>
            <person name="Iida J."/>
            <person name="Imamura K."/>
            <person name="Itoh M."/>
            <person name="Kato T."/>
            <person name="Kawaji H."/>
            <person name="Kawagashira N."/>
            <person name="Kawashima T."/>
            <person name="Kojima M."/>
            <person name="Kondo S."/>
            <person name="Konno H."/>
            <person name="Nakano K."/>
            <person name="Ninomiya N."/>
            <person name="Nishio T."/>
            <person name="Okada M."/>
            <person name="Plessy C."/>
            <person name="Shibata K."/>
            <person name="Shiraki T."/>
            <person name="Suzuki S."/>
            <person name="Tagami M."/>
            <person name="Waki K."/>
            <person name="Watahiki A."/>
            <person name="Okamura-Oho Y."/>
            <person name="Suzuki H."/>
            <person name="Kawai J."/>
            <person name="Hayashizaki Y."/>
        </authorList>
    </citation>
    <scope>NUCLEOTIDE SEQUENCE [LARGE SCALE MRNA] (ISOFORM 3)</scope>
    <source>
        <strain>C57BL/6J</strain>
        <tissue>Embryo</tissue>
        <tissue>Testis</tissue>
    </source>
</reference>
<reference key="4">
    <citation type="journal article" date="2004" name="Genome Res.">
        <title>The status, quality, and expansion of the NIH full-length cDNA project: the Mammalian Gene Collection (MGC).</title>
        <authorList>
            <consortium name="The MGC Project Team"/>
        </authorList>
    </citation>
    <scope>NUCLEOTIDE SEQUENCE [LARGE SCALE MRNA] (ISOFORM 1)</scope>
    <source>
        <strain>FVB/N</strain>
        <tissue>Mammary gland</tissue>
    </source>
</reference>
<reference key="5">
    <citation type="journal article" date="2010" name="Cell">
        <title>A tissue-specific atlas of mouse protein phosphorylation and expression.</title>
        <authorList>
            <person name="Huttlin E.L."/>
            <person name="Jedrychowski M.P."/>
            <person name="Elias J.E."/>
            <person name="Goswami T."/>
            <person name="Rad R."/>
            <person name="Beausoleil S.A."/>
            <person name="Villen J."/>
            <person name="Haas W."/>
            <person name="Sowa M.E."/>
            <person name="Gygi S.P."/>
        </authorList>
    </citation>
    <scope>PHOSPHORYLATION [LARGE SCALE ANALYSIS] AT SER-148 AND SER-150</scope>
    <scope>IDENTIFICATION BY MASS SPECTROMETRY [LARGE SCALE ANALYSIS]</scope>
    <source>
        <tissue>Brain</tissue>
        <tissue>Brown adipose tissue</tissue>
        <tissue>Heart</tissue>
        <tissue>Liver</tissue>
        <tissue>Lung</tissue>
        <tissue>Pancreas</tissue>
        <tissue>Spleen</tissue>
        <tissue>Testis</tissue>
    </source>
</reference>
<reference key="6">
    <citation type="journal article" date="2013" name="Mol. Cell">
        <title>SIRT5-mediated lysine desuccinylation impacts diverse metabolic pathways.</title>
        <authorList>
            <person name="Park J."/>
            <person name="Chen Y."/>
            <person name="Tishkoff D.X."/>
            <person name="Peng C."/>
            <person name="Tan M."/>
            <person name="Dai L."/>
            <person name="Xie Z."/>
            <person name="Zhang Y."/>
            <person name="Zwaans B.M."/>
            <person name="Skinner M.E."/>
            <person name="Lombard D.B."/>
            <person name="Zhao Y."/>
        </authorList>
    </citation>
    <scope>ACETYLATION [LARGE SCALE ANALYSIS] AT LYS-620</scope>
    <scope>IDENTIFICATION BY MASS SPECTROMETRY [LARGE SCALE ANALYSIS]</scope>
    <source>
        <tissue>Embryonic fibroblast</tissue>
    </source>
</reference>
<reference key="7">
    <citation type="journal article" date="2021" name="Elife">
        <title>Defects in translation-dependent quality control pathways lead to convergent molecular and neurodevelopmental pathology.</title>
        <authorList>
            <person name="Terrey M."/>
            <person name="Adamson S.I."/>
            <person name="Chuang J.H."/>
            <person name="Ackerman S.L."/>
        </authorList>
    </citation>
    <scope>DISRUPTION PHENOTYPE</scope>
</reference>
<reference key="8">
    <citation type="submission" date="2004-08" db="PDB data bank">
        <title>Solution structure of HBS1-like domain in hypothetical protein BAB28515.</title>
        <authorList>
            <consortium name="RIKEN structural genomics initiative (RSGI)"/>
        </authorList>
    </citation>
    <scope>STRUCTURE BY NMR OF 51-120</scope>
</reference>
<gene>
    <name evidence="9" type="primary">Hbs1l</name>
    <name evidence="10" type="synonym">Hbs1</name>
    <name evidence="7" type="synonym">Kiaa1038</name>
</gene>
<feature type="chain" id="PRO_0000091492" description="HBS1-like protein">
    <location>
        <begin position="1"/>
        <end position="682"/>
    </location>
</feature>
<feature type="domain" description="tr-type G" evidence="3">
    <location>
        <begin position="256"/>
        <end position="480"/>
    </location>
</feature>
<feature type="region of interest" description="Disordered" evidence="4">
    <location>
        <begin position="128"/>
        <end position="154"/>
    </location>
</feature>
<feature type="region of interest" description="Disordered" evidence="4">
    <location>
        <begin position="166"/>
        <end position="239"/>
    </location>
</feature>
<feature type="region of interest" description="G1" evidence="3">
    <location>
        <begin position="265"/>
        <end position="272"/>
    </location>
</feature>
<feature type="region of interest" description="G2" evidence="3">
    <location>
        <begin position="321"/>
        <end position="325"/>
    </location>
</feature>
<feature type="region of interest" description="G3" evidence="3">
    <location>
        <begin position="342"/>
        <end position="345"/>
    </location>
</feature>
<feature type="region of interest" description="G4" evidence="3">
    <location>
        <begin position="404"/>
        <end position="407"/>
    </location>
</feature>
<feature type="region of interest" description="G5" evidence="3">
    <location>
        <begin position="443"/>
        <end position="445"/>
    </location>
</feature>
<feature type="compositionally biased region" description="Low complexity" evidence="4">
    <location>
        <begin position="142"/>
        <end position="154"/>
    </location>
</feature>
<feature type="compositionally biased region" description="Polar residues" evidence="4">
    <location>
        <begin position="201"/>
        <end position="211"/>
    </location>
</feature>
<feature type="compositionally biased region" description="Polar residues" evidence="4">
    <location>
        <begin position="220"/>
        <end position="231"/>
    </location>
</feature>
<feature type="binding site" evidence="2">
    <location>
        <begin position="265"/>
        <end position="272"/>
    </location>
    <ligand>
        <name>GTP</name>
        <dbReference type="ChEBI" id="CHEBI:37565"/>
    </ligand>
</feature>
<feature type="binding site" evidence="2">
    <location>
        <begin position="404"/>
        <end position="407"/>
    </location>
    <ligand>
        <name>GTP</name>
        <dbReference type="ChEBI" id="CHEBI:37565"/>
    </ligand>
</feature>
<feature type="binding site" evidence="2">
    <location>
        <begin position="443"/>
        <end position="445"/>
    </location>
    <ligand>
        <name>GTP</name>
        <dbReference type="ChEBI" id="CHEBI:37565"/>
    </ligand>
</feature>
<feature type="modified residue" description="Phosphoserine" evidence="2">
    <location>
        <position position="63"/>
    </location>
</feature>
<feature type="modified residue" description="Phosphoserine" evidence="2">
    <location>
        <position position="113"/>
    </location>
</feature>
<feature type="modified residue" description="Phosphoserine" evidence="12">
    <location>
        <position position="148"/>
    </location>
</feature>
<feature type="modified residue" description="Phosphoserine" evidence="12">
    <location>
        <position position="150"/>
    </location>
</feature>
<feature type="modified residue" description="Phosphothreonine" evidence="2">
    <location>
        <position position="229"/>
    </location>
</feature>
<feature type="modified residue" description="N6-acetyllysine" evidence="13">
    <location>
        <position position="620"/>
    </location>
</feature>
<feature type="splice variant" id="VSP_013626" description="In isoform 2." evidence="10">
    <location>
        <begin position="1"/>
        <end position="83"/>
    </location>
</feature>
<feature type="splice variant" id="VSP_013627" description="In isoform 3." evidence="8">
    <original>KSVISRSSQSESEIVPKVAKMTVSGKK</original>
    <variation>VLFSSFGVSPQNVHHSYLQSENHLDSS</variation>
    <location>
        <begin position="141"/>
        <end position="167"/>
    </location>
</feature>
<feature type="splice variant" id="VSP_013628" description="In isoform 3." evidence="8">
    <location>
        <begin position="168"/>
        <end position="682"/>
    </location>
</feature>
<feature type="sequence conflict" description="In Ref. 1; AAD23351." evidence="11" ref="1">
    <original>A</original>
    <variation>R</variation>
    <location>
        <position position="201"/>
    </location>
</feature>
<feature type="sequence conflict" description="In Ref. 1; AAD23351." evidence="11" ref="1">
    <original>KR</original>
    <variation>NAV</variation>
    <location>
        <begin position="251"/>
        <end position="252"/>
    </location>
</feature>
<feature type="sequence conflict" description="In Ref. 3; AAH10251." evidence="11" ref="3">
    <original>G</original>
    <variation>A</variation>
    <location>
        <position position="568"/>
    </location>
</feature>
<feature type="helix" evidence="14">
    <location>
        <begin position="51"/>
        <end position="57"/>
    </location>
</feature>
<feature type="helix" evidence="14">
    <location>
        <begin position="63"/>
        <end position="68"/>
    </location>
</feature>
<feature type="helix" evidence="14">
    <location>
        <begin position="71"/>
        <end position="87"/>
    </location>
</feature>
<feature type="turn" evidence="14">
    <location>
        <begin position="88"/>
        <end position="91"/>
    </location>
</feature>
<feature type="helix" evidence="14">
    <location>
        <begin position="94"/>
        <end position="103"/>
    </location>
</feature>
<feature type="helix" evidence="14">
    <location>
        <begin position="108"/>
        <end position="120"/>
    </location>
</feature>
<feature type="sequence conflict" description="In Ref. 3; BAB24679." evidence="11" ref="3">
    <original>F</original>
    <variation>L</variation>
    <location sequence="Q69ZS7-3">
        <position position="146"/>
    </location>
</feature>
<sequence length="682" mass="75100">MARHRNVRGYNYDEDFEDDDLYGQSVEDDYCISPSTAAQFIYSRRDNPEEEYGYEDLRESSNSLLNHQLSEIDQARLYSCLDHMREVLGDAVPDDILTEAILKHKFDVQKALSVVLEQDGVQPWKEKSERAVCAGQPSKGKSVISRSSQSESEIVPKVAKMTVSGKKQTMGFEVPGLTSEENGLSVRAPHKGPPGDDVSVASPNIPETGTPKSALPPPSLQTSEELGSTPTPVRKSGKLRQQIDVKAELEKRQGGKQLLNLVVIGHVDAGKSTLMGHMLYLLGNVNKRTMHKYEQESKKAGKASFAYAWVLDETGEERERGVTMDVGMTKFETTTKVITLMDAPGHKDFIPNMITGAAQADVAVLVVDASRGEFEAGFETGGQTREHGLLVRSLGVTQLAVAVNKMDQVNWQQERFQEITGKLGHFLKQAGFKESDVAFIPTSGLSGENLTARSQSSDLTTWYKGMCLLEQIDSFKPPQRSIDKPFRLCVSDVFKDQGSGFCVTGKIEAGYIQTGDRLLAMPPNETCTAKGITLHDEPVDWAAAGDHVNLTLVGMDIIKINVGCIFCGPKEPIKACTRFRARILVFNIEVPITKGFPVLLHYQTVSEPAVIKRLISVLNKSTGEVTKKKPKLLTKGQNALVELQTQRPVALELYKDFKELGRFMLRYGGSTVAAGVVTEIKE</sequence>
<accession>Q69ZS7</accession>
<accession>Q91Z32</accession>
<accession>Q9CVT2</accession>
<accession>Q9CZ95</accession>
<accession>Q9WTY5</accession>
<dbReference type="EC" id="3.6.5.-" evidence="1"/>
<dbReference type="EMBL" id="AF087672">
    <property type="protein sequence ID" value="AAD23351.1"/>
    <property type="molecule type" value="mRNA"/>
</dbReference>
<dbReference type="EMBL" id="AK173091">
    <property type="protein sequence ID" value="BAD32369.1"/>
    <property type="status" value="ALT_INIT"/>
    <property type="molecule type" value="mRNA"/>
</dbReference>
<dbReference type="EMBL" id="AK006626">
    <property type="protein sequence ID" value="BAB24679.1"/>
    <property type="molecule type" value="mRNA"/>
</dbReference>
<dbReference type="EMBL" id="AK012856">
    <property type="protein sequence ID" value="BAB28515.1"/>
    <property type="molecule type" value="mRNA"/>
</dbReference>
<dbReference type="EMBL" id="BC010251">
    <property type="protein sequence ID" value="AAH10251.1"/>
    <property type="molecule type" value="mRNA"/>
</dbReference>
<dbReference type="CCDS" id="CCDS35862.1">
    <molecule id="Q69ZS7-1"/>
</dbReference>
<dbReference type="RefSeq" id="NP_062676.2">
    <molecule id="Q69ZS7-1"/>
    <property type="nucleotide sequence ID" value="NM_019702.3"/>
</dbReference>
<dbReference type="PDB" id="1UFZ">
    <property type="method" value="NMR"/>
    <property type="chains" value="A=51-120"/>
</dbReference>
<dbReference type="PDBsum" id="1UFZ"/>
<dbReference type="SMR" id="Q69ZS7"/>
<dbReference type="BioGRID" id="207968">
    <property type="interactions" value="6"/>
</dbReference>
<dbReference type="DIP" id="DIP-61684N"/>
<dbReference type="FunCoup" id="Q69ZS7">
    <property type="interactions" value="1615"/>
</dbReference>
<dbReference type="IntAct" id="Q69ZS7">
    <property type="interactions" value="2"/>
</dbReference>
<dbReference type="MINT" id="Q69ZS7"/>
<dbReference type="STRING" id="10090.ENSMUSP00000151689"/>
<dbReference type="GlyGen" id="Q69ZS7">
    <property type="glycosylation" value="3 sites, 1 N-linked glycan (1 site), 1 O-linked glycan (1 site)"/>
</dbReference>
<dbReference type="iPTMnet" id="Q69ZS7"/>
<dbReference type="PhosphoSitePlus" id="Q69ZS7"/>
<dbReference type="SwissPalm" id="Q69ZS7"/>
<dbReference type="jPOST" id="Q69ZS7"/>
<dbReference type="PaxDb" id="10090-ENSMUSP00000020153"/>
<dbReference type="PeptideAtlas" id="Q69ZS7"/>
<dbReference type="ProteomicsDB" id="270946">
    <molecule id="Q69ZS7-1"/>
</dbReference>
<dbReference type="ProteomicsDB" id="270947">
    <molecule id="Q69ZS7-2"/>
</dbReference>
<dbReference type="ProteomicsDB" id="270948">
    <molecule id="Q69ZS7-3"/>
</dbReference>
<dbReference type="Pumba" id="Q69ZS7"/>
<dbReference type="Antibodypedia" id="32972">
    <property type="antibodies" value="391 antibodies from 26 providers"/>
</dbReference>
<dbReference type="Ensembl" id="ENSMUST00000219915.2">
    <molecule id="Q69ZS7-1"/>
    <property type="protein sequence ID" value="ENSMUSP00000151689.2"/>
    <property type="gene ID" value="ENSMUSG00000019977.17"/>
</dbReference>
<dbReference type="GeneID" id="56422"/>
<dbReference type="KEGG" id="mmu:56422"/>
<dbReference type="UCSC" id="uc007eom.1">
    <molecule id="Q69ZS7-3"/>
    <property type="organism name" value="mouse"/>
</dbReference>
<dbReference type="UCSC" id="uc007eoo.1">
    <molecule id="Q69ZS7-1"/>
    <property type="organism name" value="mouse"/>
</dbReference>
<dbReference type="AGR" id="MGI:1891704"/>
<dbReference type="CTD" id="10767"/>
<dbReference type="MGI" id="MGI:1891704">
    <property type="gene designation" value="Hbs1l"/>
</dbReference>
<dbReference type="VEuPathDB" id="HostDB:ENSMUSG00000019977"/>
<dbReference type="eggNOG" id="KOG0458">
    <property type="taxonomic scope" value="Eukaryota"/>
</dbReference>
<dbReference type="GeneTree" id="ENSGT00940000156274"/>
<dbReference type="HOGENOM" id="CLU_007265_3_6_1"/>
<dbReference type="InParanoid" id="Q69ZS7"/>
<dbReference type="OMA" id="VVQITCH"/>
<dbReference type="OrthoDB" id="342024at2759"/>
<dbReference type="PhylomeDB" id="Q69ZS7"/>
<dbReference type="TreeFam" id="TF105833"/>
<dbReference type="Reactome" id="R-MMU-429958">
    <property type="pathway name" value="mRNA decay by 3' to 5' exoribonuclease"/>
</dbReference>
<dbReference type="BioGRID-ORCS" id="56422">
    <property type="hits" value="19 hits in 76 CRISPR screens"/>
</dbReference>
<dbReference type="ChiTaRS" id="Hbs1l">
    <property type="organism name" value="mouse"/>
</dbReference>
<dbReference type="EvolutionaryTrace" id="Q69ZS7"/>
<dbReference type="PRO" id="PR:Q69ZS7"/>
<dbReference type="Proteomes" id="UP000000589">
    <property type="component" value="Chromosome 10"/>
</dbReference>
<dbReference type="RNAct" id="Q69ZS7">
    <property type="molecule type" value="protein"/>
</dbReference>
<dbReference type="Bgee" id="ENSMUSG00000019977">
    <property type="expression patterns" value="Expressed in spermatid and 266 other cell types or tissues"/>
</dbReference>
<dbReference type="ExpressionAtlas" id="Q69ZS7">
    <property type="expression patterns" value="baseline and differential"/>
</dbReference>
<dbReference type="GO" id="GO:0022626">
    <property type="term" value="C:cytosolic ribosome"/>
    <property type="evidence" value="ECO:0007669"/>
    <property type="project" value="Ensembl"/>
</dbReference>
<dbReference type="GO" id="GO:1990533">
    <property type="term" value="C:Dom34-Hbs1 complex"/>
    <property type="evidence" value="ECO:0000250"/>
    <property type="project" value="UniProtKB"/>
</dbReference>
<dbReference type="GO" id="GO:0005525">
    <property type="term" value="F:GTP binding"/>
    <property type="evidence" value="ECO:0000250"/>
    <property type="project" value="MGI"/>
</dbReference>
<dbReference type="GO" id="GO:0003924">
    <property type="term" value="F:GTPase activity"/>
    <property type="evidence" value="ECO:0007669"/>
    <property type="project" value="InterPro"/>
</dbReference>
<dbReference type="GO" id="GO:0003746">
    <property type="term" value="F:translation elongation factor activity"/>
    <property type="evidence" value="ECO:0007669"/>
    <property type="project" value="UniProtKB-KW"/>
</dbReference>
<dbReference type="GO" id="GO:0070966">
    <property type="term" value="P:nuclear-transcribed mRNA catabolic process, no-go decay"/>
    <property type="evidence" value="ECO:0000250"/>
    <property type="project" value="UniProtKB"/>
</dbReference>
<dbReference type="GO" id="GO:0006417">
    <property type="term" value="P:regulation of translation"/>
    <property type="evidence" value="ECO:0007669"/>
    <property type="project" value="UniProtKB-KW"/>
</dbReference>
<dbReference type="GO" id="GO:0072344">
    <property type="term" value="P:rescue of stalled ribosome"/>
    <property type="evidence" value="ECO:0007669"/>
    <property type="project" value="Ensembl"/>
</dbReference>
<dbReference type="GO" id="GO:0032790">
    <property type="term" value="P:ribosome disassembly"/>
    <property type="evidence" value="ECO:0000250"/>
    <property type="project" value="UniProtKB"/>
</dbReference>
<dbReference type="CDD" id="cd01883">
    <property type="entry name" value="EF1_alpha"/>
    <property type="match status" value="1"/>
</dbReference>
<dbReference type="CDD" id="cd16267">
    <property type="entry name" value="HBS1-like_II"/>
    <property type="match status" value="1"/>
</dbReference>
<dbReference type="CDD" id="cd04093">
    <property type="entry name" value="HBS1_C_III"/>
    <property type="match status" value="1"/>
</dbReference>
<dbReference type="FunFam" id="1.10.8.10:FF:000039">
    <property type="entry name" value="HBS1-like translational GTPase"/>
    <property type="match status" value="1"/>
</dbReference>
<dbReference type="FunFam" id="2.40.30.10:FF:000035">
    <property type="entry name" value="HBS1-like translational GTPase"/>
    <property type="match status" value="1"/>
</dbReference>
<dbReference type="FunFam" id="2.40.30.10:FF:000020">
    <property type="entry name" value="Translation elongation factor EF-1"/>
    <property type="match status" value="1"/>
</dbReference>
<dbReference type="FunFam" id="3.40.50.300:FF:000204">
    <property type="entry name" value="Translation elongation factor Tu"/>
    <property type="match status" value="1"/>
</dbReference>
<dbReference type="Gene3D" id="1.10.8.10">
    <property type="entry name" value="DNA helicase RuvA subunit, C-terminal domain"/>
    <property type="match status" value="1"/>
</dbReference>
<dbReference type="Gene3D" id="3.40.50.300">
    <property type="entry name" value="P-loop containing nucleotide triphosphate hydrolases"/>
    <property type="match status" value="1"/>
</dbReference>
<dbReference type="Gene3D" id="2.40.30.10">
    <property type="entry name" value="Translation factors"/>
    <property type="match status" value="2"/>
</dbReference>
<dbReference type="InterPro" id="IPR004161">
    <property type="entry name" value="EFTu-like_2"/>
</dbReference>
<dbReference type="InterPro" id="IPR054696">
    <property type="entry name" value="GTP-eEF1A_C"/>
</dbReference>
<dbReference type="InterPro" id="IPR015033">
    <property type="entry name" value="HBS1-like_N"/>
</dbReference>
<dbReference type="InterPro" id="IPR037189">
    <property type="entry name" value="HBS1-like_N_sf"/>
</dbReference>
<dbReference type="InterPro" id="IPR027417">
    <property type="entry name" value="P-loop_NTPase"/>
</dbReference>
<dbReference type="InterPro" id="IPR000795">
    <property type="entry name" value="T_Tr_GTP-bd_dom"/>
</dbReference>
<dbReference type="InterPro" id="IPR050100">
    <property type="entry name" value="TRAFAC_GTPase_members"/>
</dbReference>
<dbReference type="InterPro" id="IPR009000">
    <property type="entry name" value="Transl_B-barrel_sf"/>
</dbReference>
<dbReference type="InterPro" id="IPR009001">
    <property type="entry name" value="Transl_elong_EF1A/Init_IF2_C"/>
</dbReference>
<dbReference type="PANTHER" id="PTHR23115">
    <property type="entry name" value="TRANSLATION FACTOR"/>
    <property type="match status" value="1"/>
</dbReference>
<dbReference type="Pfam" id="PF22594">
    <property type="entry name" value="GTP-eEF1A_C"/>
    <property type="match status" value="1"/>
</dbReference>
<dbReference type="Pfam" id="PF00009">
    <property type="entry name" value="GTP_EFTU"/>
    <property type="match status" value="1"/>
</dbReference>
<dbReference type="Pfam" id="PF03144">
    <property type="entry name" value="GTP_EFTU_D2"/>
    <property type="match status" value="1"/>
</dbReference>
<dbReference type="Pfam" id="PF08938">
    <property type="entry name" value="HBS1_N"/>
    <property type="match status" value="1"/>
</dbReference>
<dbReference type="PRINTS" id="PR00315">
    <property type="entry name" value="ELONGATNFCT"/>
</dbReference>
<dbReference type="SUPFAM" id="SSF50465">
    <property type="entry name" value="EF-Tu/eEF-1alpha/eIF2-gamma C-terminal domain"/>
    <property type="match status" value="1"/>
</dbReference>
<dbReference type="SUPFAM" id="SSF109732">
    <property type="entry name" value="HBS1-like domain"/>
    <property type="match status" value="1"/>
</dbReference>
<dbReference type="SUPFAM" id="SSF52540">
    <property type="entry name" value="P-loop containing nucleoside triphosphate hydrolases"/>
    <property type="match status" value="1"/>
</dbReference>
<dbReference type="SUPFAM" id="SSF50447">
    <property type="entry name" value="Translation proteins"/>
    <property type="match status" value="1"/>
</dbReference>
<dbReference type="PROSITE" id="PS51722">
    <property type="entry name" value="G_TR_2"/>
    <property type="match status" value="1"/>
</dbReference>
<name>HBS1L_MOUSE</name>
<proteinExistence type="evidence at protein level"/>
<comment type="function">
    <text evidence="2">GTPase component of the Pelota-HBS1L complex, a complex that recognizes stalled ribosomes and triggers the No-Go Decay (NGD) pathway. The Pelota-HBS1L complex recognizes ribosomes stalled at the 3' end of an mRNA and engages stalled ribosomes by destabilizing mRNA in the mRNA channel. Following mRNA extraction from stalled ribosomes by the SKI complex, the Pelota-HBS1L complex promotes recruitment of ABCE1, which drives the disassembly of stalled ribosomes, followed by degradation of damaged mRNAs as part of the NGD pathway.</text>
</comment>
<comment type="catalytic activity">
    <reaction evidence="1">
        <text>GTP + H2O = GDP + phosphate + H(+)</text>
        <dbReference type="Rhea" id="RHEA:19669"/>
        <dbReference type="ChEBI" id="CHEBI:15377"/>
        <dbReference type="ChEBI" id="CHEBI:15378"/>
        <dbReference type="ChEBI" id="CHEBI:37565"/>
        <dbReference type="ChEBI" id="CHEBI:43474"/>
        <dbReference type="ChEBI" id="CHEBI:58189"/>
    </reaction>
    <physiologicalReaction direction="left-to-right" evidence="1">
        <dbReference type="Rhea" id="RHEA:19670"/>
    </physiologicalReaction>
</comment>
<comment type="subunit">
    <text evidence="2">Component of the Pelota-HBS1L complex, also named Dom34-Hbs1 complex, composed of PELO and HBS1L. Interacts with the SKI complex.</text>
</comment>
<comment type="interaction">
    <interactant intactId="EBI-16114976">
        <id>Q69ZS7</id>
    </interactant>
    <interactant intactId="EBI-16114899">
        <id>Q80X73</id>
        <label>Pelo</label>
    </interactant>
    <organismsDiffer>false</organismsDiffer>
    <experiments>2</experiments>
</comment>
<comment type="subcellular location">
    <subcellularLocation>
        <location evidence="2">Cytoplasm</location>
    </subcellularLocation>
</comment>
<comment type="alternative products">
    <event type="alternative splicing"/>
    <isoform>
        <id>Q69ZS7-1</id>
        <name>1</name>
        <sequence type="displayed"/>
    </isoform>
    <isoform>
        <id>Q69ZS7-2</id>
        <name>2</name>
        <sequence type="described" ref="VSP_013626"/>
    </isoform>
    <isoform>
        <id>Q69ZS7-3</id>
        <name>3</name>
        <sequence type="described" ref="VSP_013627 VSP_013628"/>
    </isoform>
</comment>
<comment type="tissue specificity">
    <text evidence="6">Detected in embryos.</text>
</comment>
<comment type="disruption phenotype">
    <text evidence="5">Embryonic lethality; embryos fail to develop after 8.5 dpc (PubMed:33899734). Conditional deletion in the in the developing cerebellum and midbrain leads to severe development defects in the cerebellum characterized by the absence of multiple cell types (PubMed:33899734). In contrast, conditional deletion in the adult cerebellum and midbrain does not cause defects in neuron survival (PubMed:33899734). Defects are probably caused by ribosome pausing, due to inability to rescue stalled ribosomes (PubMed:33899734).</text>
</comment>
<comment type="similarity">
    <text evidence="3">Belongs to the TRAFAC class translation factor GTPase superfamily. Classic translation factor GTPase family.</text>
</comment>
<comment type="sequence caution" evidence="11">
    <conflict type="erroneous initiation">
        <sequence resource="EMBL-CDS" id="BAD32369"/>
    </conflict>
</comment>
<protein>
    <recommendedName>
        <fullName evidence="11">HBS1-like protein</fullName>
        <ecNumber evidence="1">3.6.5.-</ecNumber>
    </recommendedName>
</protein>
<organism>
    <name type="scientific">Mus musculus</name>
    <name type="common">Mouse</name>
    <dbReference type="NCBI Taxonomy" id="10090"/>
    <lineage>
        <taxon>Eukaryota</taxon>
        <taxon>Metazoa</taxon>
        <taxon>Chordata</taxon>
        <taxon>Craniata</taxon>
        <taxon>Vertebrata</taxon>
        <taxon>Euteleostomi</taxon>
        <taxon>Mammalia</taxon>
        <taxon>Eutheria</taxon>
        <taxon>Euarchontoglires</taxon>
        <taxon>Glires</taxon>
        <taxon>Rodentia</taxon>
        <taxon>Myomorpha</taxon>
        <taxon>Muroidea</taxon>
        <taxon>Muridae</taxon>
        <taxon>Murinae</taxon>
        <taxon>Mus</taxon>
        <taxon>Mus</taxon>
    </lineage>
</organism>